<gene>
    <name type="ordered locus">JTY_3918</name>
</gene>
<organism>
    <name type="scientific">Mycobacterium bovis (strain BCG / Tokyo 172 / ATCC 35737 / TMC 1019)</name>
    <dbReference type="NCBI Taxonomy" id="561275"/>
    <lineage>
        <taxon>Bacteria</taxon>
        <taxon>Bacillati</taxon>
        <taxon>Actinomycetota</taxon>
        <taxon>Actinomycetes</taxon>
        <taxon>Mycobacteriales</taxon>
        <taxon>Mycobacteriaceae</taxon>
        <taxon>Mycobacterium</taxon>
        <taxon>Mycobacterium tuberculosis complex</taxon>
    </lineage>
</organism>
<name>RRAAH_MYCBT</name>
<dbReference type="EC" id="4.1.3.17"/>
<dbReference type="EC" id="4.1.1.112"/>
<dbReference type="EMBL" id="AP010918">
    <property type="protein sequence ID" value="BAH28188.1"/>
    <property type="molecule type" value="Genomic_DNA"/>
</dbReference>
<dbReference type="SMR" id="C1AIV9"/>
<dbReference type="KEGG" id="mbt:JTY_3918"/>
<dbReference type="HOGENOM" id="CLU_072626_4_0_11"/>
<dbReference type="GO" id="GO:0047443">
    <property type="term" value="F:4-hydroxy-4-methyl-2-oxoglutarate aldolase activity"/>
    <property type="evidence" value="ECO:0007669"/>
    <property type="project" value="UniProtKB-EC"/>
</dbReference>
<dbReference type="GO" id="GO:0046872">
    <property type="term" value="F:metal ion binding"/>
    <property type="evidence" value="ECO:0007669"/>
    <property type="project" value="UniProtKB-KW"/>
</dbReference>
<dbReference type="GO" id="GO:0008948">
    <property type="term" value="F:oxaloacetate decarboxylase activity"/>
    <property type="evidence" value="ECO:0007669"/>
    <property type="project" value="UniProtKB-EC"/>
</dbReference>
<dbReference type="GO" id="GO:0008428">
    <property type="term" value="F:ribonuclease inhibitor activity"/>
    <property type="evidence" value="ECO:0007669"/>
    <property type="project" value="InterPro"/>
</dbReference>
<dbReference type="GO" id="GO:0051252">
    <property type="term" value="P:regulation of RNA metabolic process"/>
    <property type="evidence" value="ECO:0007669"/>
    <property type="project" value="InterPro"/>
</dbReference>
<dbReference type="CDD" id="cd16841">
    <property type="entry name" value="RraA_family"/>
    <property type="match status" value="1"/>
</dbReference>
<dbReference type="Gene3D" id="3.50.30.40">
    <property type="entry name" value="Ribonuclease E inhibitor RraA/RraA-like"/>
    <property type="match status" value="1"/>
</dbReference>
<dbReference type="InterPro" id="IPR010203">
    <property type="entry name" value="RraA"/>
</dbReference>
<dbReference type="InterPro" id="IPR005493">
    <property type="entry name" value="RraA/RraA-like"/>
</dbReference>
<dbReference type="InterPro" id="IPR036704">
    <property type="entry name" value="RraA/RraA-like_sf"/>
</dbReference>
<dbReference type="NCBIfam" id="TIGR01935">
    <property type="entry name" value="NOT-MenG"/>
    <property type="match status" value="1"/>
</dbReference>
<dbReference type="NCBIfam" id="NF006875">
    <property type="entry name" value="PRK09372.1"/>
    <property type="match status" value="1"/>
</dbReference>
<dbReference type="PANTHER" id="PTHR33254">
    <property type="entry name" value="4-HYDROXY-4-METHYL-2-OXOGLUTARATE ALDOLASE 3-RELATED"/>
    <property type="match status" value="1"/>
</dbReference>
<dbReference type="PANTHER" id="PTHR33254:SF4">
    <property type="entry name" value="4-HYDROXY-4-METHYL-2-OXOGLUTARATE ALDOLASE 3-RELATED"/>
    <property type="match status" value="1"/>
</dbReference>
<dbReference type="Pfam" id="PF03737">
    <property type="entry name" value="RraA-like"/>
    <property type="match status" value="1"/>
</dbReference>
<dbReference type="SUPFAM" id="SSF89562">
    <property type="entry name" value="RraA-like"/>
    <property type="match status" value="1"/>
</dbReference>
<protein>
    <recommendedName>
        <fullName>Putative 4-hydroxy-4-methyl-2-oxoglutarate aldolase</fullName>
        <shortName>HMG aldolase</shortName>
        <ecNumber>4.1.3.17</ecNumber>
    </recommendedName>
    <alternativeName>
        <fullName>Oxaloacetate decarboxylase</fullName>
        <shortName>OAA decarboxylase</shortName>
        <ecNumber>4.1.1.112</ecNumber>
    </alternativeName>
    <alternativeName>
        <fullName>Regulator of ribonuclease activity homolog</fullName>
    </alternativeName>
    <alternativeName>
        <fullName>RraA-like protein</fullName>
    </alternativeName>
</protein>
<feature type="chain" id="PRO_1000135495" description="Putative 4-hydroxy-4-methyl-2-oxoglutarate aldolase">
    <location>
        <begin position="1"/>
        <end position="157"/>
    </location>
</feature>
<feature type="binding site" evidence="1">
    <location>
        <begin position="78"/>
        <end position="81"/>
    </location>
    <ligand>
        <name>substrate</name>
    </ligand>
</feature>
<feature type="binding site" evidence="1">
    <location>
        <position position="100"/>
    </location>
    <ligand>
        <name>substrate</name>
    </ligand>
</feature>
<feature type="binding site" evidence="1">
    <location>
        <position position="101"/>
    </location>
    <ligand>
        <name>a divalent metal cation</name>
        <dbReference type="ChEBI" id="CHEBI:60240"/>
    </ligand>
</feature>
<proteinExistence type="inferred from homology"/>
<evidence type="ECO:0000250" key="1"/>
<evidence type="ECO:0000305" key="2"/>
<keyword id="KW-0456">Lyase</keyword>
<keyword id="KW-0479">Metal-binding</keyword>
<sequence>MAISFRPTADLVDDIGPDVRSCDLQFRQFGGRSQFAGPISTVRCFQDNALLKSVLSQPSAGGVLVIDGAGSLHTALVGDVIAELARSTGWTGLIVHGAVRDAAALRGIDIGIKALGTNPRKSTKTGAGERDVEITLGGVTFVPGDIAYSDDDGIIVV</sequence>
<reference key="1">
    <citation type="journal article" date="2009" name="Vaccine">
        <title>Whole genome sequence analysis of Mycobacterium bovis bacillus Calmette-Guerin (BCG) Tokyo 172: a comparative study of BCG vaccine substrains.</title>
        <authorList>
            <person name="Seki M."/>
            <person name="Honda I."/>
            <person name="Fujita I."/>
            <person name="Yano I."/>
            <person name="Yamamoto S."/>
            <person name="Koyama A."/>
        </authorList>
    </citation>
    <scope>NUCLEOTIDE SEQUENCE [LARGE SCALE GENOMIC DNA]</scope>
    <source>
        <strain>BCG / Tokyo 172 / ATCC 35737 / TMC 1019</strain>
    </source>
</reference>
<accession>C1AIV9</accession>
<comment type="function">
    <text evidence="1">Catalyzes the aldol cleavage of 4-hydroxy-4-methyl-2-oxoglutarate (HMG) into 2 molecules of pyruvate. Also contains a secondary oxaloacetate (OAA) decarboxylase activity due to the common pyruvate enolate transition state formed following C-C bond cleavage in the retro-aldol and decarboxylation reactions (By similarity).</text>
</comment>
<comment type="catalytic activity">
    <reaction>
        <text>4-hydroxy-4-methyl-2-oxoglutarate = 2 pyruvate</text>
        <dbReference type="Rhea" id="RHEA:22748"/>
        <dbReference type="ChEBI" id="CHEBI:15361"/>
        <dbReference type="ChEBI" id="CHEBI:58276"/>
        <dbReference type="EC" id="4.1.3.17"/>
    </reaction>
</comment>
<comment type="catalytic activity">
    <reaction>
        <text>oxaloacetate + H(+) = pyruvate + CO2</text>
        <dbReference type="Rhea" id="RHEA:15641"/>
        <dbReference type="ChEBI" id="CHEBI:15361"/>
        <dbReference type="ChEBI" id="CHEBI:15378"/>
        <dbReference type="ChEBI" id="CHEBI:16452"/>
        <dbReference type="ChEBI" id="CHEBI:16526"/>
        <dbReference type="EC" id="4.1.1.112"/>
    </reaction>
</comment>
<comment type="cofactor">
    <cofactor evidence="1">
        <name>a divalent metal cation</name>
        <dbReference type="ChEBI" id="CHEBI:60240"/>
    </cofactor>
    <text evidence="1">Divalent metal cation.</text>
</comment>
<comment type="subunit">
    <text evidence="1">Homotrimer.</text>
</comment>
<comment type="similarity">
    <text evidence="2">Belongs to the class II aldolase/RraA-like family.</text>
</comment>